<dbReference type="EMBL" id="AB053171">
    <property type="protein sequence ID" value="BAB58956.1"/>
    <property type="molecule type" value="mRNA"/>
</dbReference>
<dbReference type="EMBL" id="AB053262">
    <property type="protein sequence ID" value="BAB58957.1"/>
    <property type="molecule type" value="Genomic_DNA"/>
</dbReference>
<dbReference type="EMBL" id="AB023044">
    <property type="protein sequence ID" value="BAA97386.1"/>
    <property type="status" value="ALT_SEQ"/>
    <property type="molecule type" value="Genomic_DNA"/>
</dbReference>
<dbReference type="EMBL" id="AB023044">
    <property type="protein sequence ID" value="BAA97387.1"/>
    <property type="status" value="ALT_SEQ"/>
    <property type="molecule type" value="Genomic_DNA"/>
</dbReference>
<dbReference type="EMBL" id="CP002688">
    <property type="protein sequence ID" value="AED96055.1"/>
    <property type="molecule type" value="Genomic_DNA"/>
</dbReference>
<dbReference type="EMBL" id="CP002688">
    <property type="protein sequence ID" value="AED96056.1"/>
    <property type="molecule type" value="Genomic_DNA"/>
</dbReference>
<dbReference type="EMBL" id="CP002688">
    <property type="protein sequence ID" value="AED96057.1"/>
    <property type="molecule type" value="Genomic_DNA"/>
</dbReference>
<dbReference type="EMBL" id="AY140086">
    <property type="protein sequence ID" value="AAM98227.1"/>
    <property type="molecule type" value="mRNA"/>
</dbReference>
<dbReference type="EMBL" id="BT008388">
    <property type="protein sequence ID" value="AAP37747.1"/>
    <property type="molecule type" value="mRNA"/>
</dbReference>
<dbReference type="RefSeq" id="NP_001119413.1">
    <molecule id="Q8L6Y4-2"/>
    <property type="nucleotide sequence ID" value="NM_001125941.1"/>
</dbReference>
<dbReference type="RefSeq" id="NP_199936.2">
    <molecule id="Q8L6Y4-2"/>
    <property type="nucleotide sequence ID" value="NM_124502.3"/>
</dbReference>
<dbReference type="RefSeq" id="NP_851168.1">
    <molecule id="Q8L6Y4-1"/>
    <property type="nucleotide sequence ID" value="NM_180837.3"/>
</dbReference>
<dbReference type="BioGRID" id="20443">
    <property type="interactions" value="8"/>
</dbReference>
<dbReference type="FunCoup" id="Q8L6Y4">
    <property type="interactions" value="1846"/>
</dbReference>
<dbReference type="IntAct" id="Q8L6Y4">
    <property type="interactions" value="9"/>
</dbReference>
<dbReference type="STRING" id="3702.Q8L6Y4"/>
<dbReference type="iPTMnet" id="Q8L6Y4"/>
<dbReference type="PaxDb" id="3702-AT5G51230.1"/>
<dbReference type="ProteomicsDB" id="222657">
    <molecule id="Q8L6Y4-1"/>
</dbReference>
<dbReference type="EnsemblPlants" id="AT5G51230.1">
    <molecule id="Q8L6Y4-1"/>
    <property type="protein sequence ID" value="AT5G51230.1"/>
    <property type="gene ID" value="AT5G51230"/>
</dbReference>
<dbReference type="EnsemblPlants" id="AT5G51230.2">
    <molecule id="Q8L6Y4-2"/>
    <property type="protein sequence ID" value="AT5G51230.2"/>
    <property type="gene ID" value="AT5G51230"/>
</dbReference>
<dbReference type="EnsemblPlants" id="AT5G51230.3">
    <molecule id="Q8L6Y4-2"/>
    <property type="protein sequence ID" value="AT5G51230.3"/>
    <property type="gene ID" value="AT5G51230"/>
</dbReference>
<dbReference type="GeneID" id="835198"/>
<dbReference type="Gramene" id="AT5G51230.1">
    <molecule id="Q8L6Y4-1"/>
    <property type="protein sequence ID" value="AT5G51230.1"/>
    <property type="gene ID" value="AT5G51230"/>
</dbReference>
<dbReference type="Gramene" id="AT5G51230.2">
    <molecule id="Q8L6Y4-2"/>
    <property type="protein sequence ID" value="AT5G51230.2"/>
    <property type="gene ID" value="AT5G51230"/>
</dbReference>
<dbReference type="Gramene" id="AT5G51230.3">
    <molecule id="Q8L6Y4-2"/>
    <property type="protein sequence ID" value="AT5G51230.3"/>
    <property type="gene ID" value="AT5G51230"/>
</dbReference>
<dbReference type="KEGG" id="ath:AT5G51230"/>
<dbReference type="Araport" id="AT5G51230"/>
<dbReference type="TAIR" id="AT5G51230">
    <property type="gene designation" value="EMF2"/>
</dbReference>
<dbReference type="eggNOG" id="KOG2350">
    <property type="taxonomic scope" value="Eukaryota"/>
</dbReference>
<dbReference type="InParanoid" id="Q8L6Y4"/>
<dbReference type="OMA" id="ASHDLFH"/>
<dbReference type="PhylomeDB" id="Q8L6Y4"/>
<dbReference type="PRO" id="PR:Q8L6Y4"/>
<dbReference type="Proteomes" id="UP000006548">
    <property type="component" value="Chromosome 5"/>
</dbReference>
<dbReference type="ExpressionAtlas" id="Q8L6Y4">
    <property type="expression patterns" value="baseline and differential"/>
</dbReference>
<dbReference type="GO" id="GO:0005634">
    <property type="term" value="C:nucleus"/>
    <property type="evidence" value="ECO:0000314"/>
    <property type="project" value="TAIR"/>
</dbReference>
<dbReference type="GO" id="GO:0031490">
    <property type="term" value="F:chromatin DNA binding"/>
    <property type="evidence" value="ECO:0000318"/>
    <property type="project" value="GO_Central"/>
</dbReference>
<dbReference type="GO" id="GO:0003677">
    <property type="term" value="F:DNA binding"/>
    <property type="evidence" value="ECO:0000250"/>
    <property type="project" value="TAIR"/>
</dbReference>
<dbReference type="GO" id="GO:0003700">
    <property type="term" value="F:DNA-binding transcription factor activity"/>
    <property type="evidence" value="ECO:0000250"/>
    <property type="project" value="TAIR"/>
</dbReference>
<dbReference type="GO" id="GO:0000976">
    <property type="term" value="F:transcription cis-regulatory region binding"/>
    <property type="evidence" value="ECO:0000353"/>
    <property type="project" value="TAIR"/>
</dbReference>
<dbReference type="GO" id="GO:0008270">
    <property type="term" value="F:zinc ion binding"/>
    <property type="evidence" value="ECO:0007669"/>
    <property type="project" value="UniProtKB-KW"/>
</dbReference>
<dbReference type="GO" id="GO:0030154">
    <property type="term" value="P:cell differentiation"/>
    <property type="evidence" value="ECO:0007669"/>
    <property type="project" value="UniProtKB-KW"/>
</dbReference>
<dbReference type="GO" id="GO:0006325">
    <property type="term" value="P:chromatin organization"/>
    <property type="evidence" value="ECO:0007669"/>
    <property type="project" value="UniProtKB-KW"/>
</dbReference>
<dbReference type="GO" id="GO:0009908">
    <property type="term" value="P:flower development"/>
    <property type="evidence" value="ECO:0007669"/>
    <property type="project" value="UniProtKB-KW"/>
</dbReference>
<dbReference type="GO" id="GO:0009910">
    <property type="term" value="P:negative regulation of flower development"/>
    <property type="evidence" value="ECO:0000315"/>
    <property type="project" value="TAIR"/>
</dbReference>
<dbReference type="CDD" id="cd21553">
    <property type="entry name" value="VEFS-box_EMF2-like"/>
    <property type="match status" value="1"/>
</dbReference>
<dbReference type="CDD" id="cd21749">
    <property type="entry name" value="ZnB-Zn_EMF2-like"/>
    <property type="match status" value="1"/>
</dbReference>
<dbReference type="InterPro" id="IPR056068">
    <property type="entry name" value="EMF2-like_DUF7651"/>
</dbReference>
<dbReference type="InterPro" id="IPR019135">
    <property type="entry name" value="Polycomb_protein_VEFS-Box"/>
</dbReference>
<dbReference type="PANTHER" id="PTHR22597">
    <property type="entry name" value="POLYCOMB GROUP PROTEIN"/>
    <property type="match status" value="1"/>
</dbReference>
<dbReference type="PANTHER" id="PTHR22597:SF22">
    <property type="entry name" value="POLYCOMB GROUP PROTEIN EMBRYONIC FLOWER 2-RELATED"/>
    <property type="match status" value="1"/>
</dbReference>
<dbReference type="Pfam" id="PF24663">
    <property type="entry name" value="DUF7651"/>
    <property type="match status" value="1"/>
</dbReference>
<dbReference type="Pfam" id="PF09733">
    <property type="entry name" value="VEFS-Box"/>
    <property type="match status" value="1"/>
</dbReference>
<dbReference type="Pfam" id="PF23320">
    <property type="entry name" value="Zn_SUZ12"/>
    <property type="match status" value="1"/>
</dbReference>
<dbReference type="PROSITE" id="PS00028">
    <property type="entry name" value="ZINC_FINGER_C2H2_1"/>
    <property type="match status" value="1"/>
</dbReference>
<comment type="function">
    <text evidence="3 4">Polycomb group (PcG) protein. Involved in flowering processes by repressing unknown target genes and preventing reproductive development. Participates in polycomb group (PcG) protein complex-mediated (probably in complex with EMF1) silencing of the flower homeotic genes AGAMOUS (AG), PISTILLATA (PI), and APETALA3 (AP3), as well as of some regulatory genes such as ABSCISIC ACID INSENSITIVE3 (ABI3), LONG VEGETATIVE PHASE1 (LOV1), and FLOWERING LOCUS C (FLC) during vegetative development, by mediating trimethylation of histone 3 lysine 27 on the AG chromatin (H3K27me3). PcG proteins act by forming multiprotein complexes, which are required to maintain the transcriptionally repressive state of homeotic genes throughout development. PcG proteins are not required to initiate repression, but to maintain it during later stages of development. They probably act via the methylation of histones, rendering chromatin heritably changed in its expressibility.</text>
</comment>
<comment type="subunit">
    <text evidence="1 5">In plants, PcG complexes are probably composed of a member of the EZ family (CLF or MEA), FIE, and a member of the VEFS family (FIS2, VRN2 or EMF2) (By similarity). Binds to ALP1 (PubMed:26642436).</text>
</comment>
<comment type="interaction">
    <interactant intactId="EBI-2128696">
        <id>Q8L6Y4</id>
    </interactant>
    <interactant intactId="EBI-307155">
        <id>P93831</id>
        <label>CLF</label>
    </interactant>
    <organismsDiffer>false</organismsDiffer>
    <experiments>4</experiments>
</comment>
<comment type="interaction">
    <interactant intactId="EBI-2128696">
        <id>Q8L6Y4</id>
    </interactant>
    <interactant intactId="EBI-632891">
        <id>O22467</id>
        <label>MSI1</label>
    </interactant>
    <organismsDiffer>false</organismsDiffer>
    <experiments>4</experiments>
</comment>
<comment type="subcellular location">
    <subcellularLocation>
        <location evidence="7">Nucleus</location>
    </subcellularLocation>
</comment>
<comment type="alternative products">
    <event type="alternative splicing"/>
    <isoform>
        <id>Q8L6Y4-1</id>
        <name>1</name>
        <sequence type="displayed"/>
    </isoform>
    <isoform>
        <id>Q8L6Y4-2</id>
        <name>2</name>
        <sequence type="described" ref="VSP_007456"/>
    </isoform>
</comment>
<comment type="tissue specificity">
    <text>Widely expressed throughout the life cycle with higher levels in proliferating tissues. Expressed in both vegetative and the reproductive shoot meristems.</text>
</comment>
<comment type="developmental stage">
    <text>Expressed in the developing embryos and endosperm, then decreases when embryos mature and soon after cellularization in the endosperm. After germination, it is expressed in the shoot apical meristems (SAMs), leaf primordia, and young leaves. In the reproductive shoots, it is expressed in both the influorescence and floral meristems. Later, it is expressed in floral organ primordia. In coflorescences, it is expressed in SAMs and lateral organs. In roots, it is expressed in root tips.</text>
</comment>
<comment type="similarity">
    <text evidence="7">Belongs to the VEFS (VRN2-EMF2-FIS2-SU(Z)12) family.</text>
</comment>
<comment type="sequence caution" evidence="7">
    <conflict type="erroneous gene model prediction">
        <sequence resource="EMBL-CDS" id="BAA97386"/>
    </conflict>
    <text>Was originally thought to correspond to two different genes At5g51230 and At5g51240.</text>
</comment>
<comment type="sequence caution" evidence="7">
    <conflict type="erroneous gene model prediction">
        <sequence resource="EMBL-CDS" id="BAA97387"/>
    </conflict>
    <text>Was originally thought to correspond to two different genes At5g51230 and At5g51240.</text>
</comment>
<evidence type="ECO:0000250" key="1"/>
<evidence type="ECO:0000256" key="2">
    <source>
        <dbReference type="SAM" id="MobiDB-lite"/>
    </source>
</evidence>
<evidence type="ECO:0000269" key="3">
    <source>
    </source>
</evidence>
<evidence type="ECO:0000269" key="4">
    <source>
    </source>
</evidence>
<evidence type="ECO:0000269" key="5">
    <source>
    </source>
</evidence>
<evidence type="ECO:0000303" key="6">
    <source>
    </source>
</evidence>
<evidence type="ECO:0000305" key="7"/>
<name>EMF2_ARATH</name>
<protein>
    <recommendedName>
        <fullName>Polycomb group protein EMBRYONIC FLOWER 2</fullName>
    </recommendedName>
</protein>
<keyword id="KW-0025">Alternative splicing</keyword>
<keyword id="KW-0156">Chromatin regulator</keyword>
<keyword id="KW-0217">Developmental protein</keyword>
<keyword id="KW-0221">Differentiation</keyword>
<keyword id="KW-0287">Flowering</keyword>
<keyword id="KW-0479">Metal-binding</keyword>
<keyword id="KW-0539">Nucleus</keyword>
<keyword id="KW-1185">Reference proteome</keyword>
<keyword id="KW-0678">Repressor</keyword>
<keyword id="KW-0804">Transcription</keyword>
<keyword id="KW-0805">Transcription regulation</keyword>
<keyword id="KW-0862">Zinc</keyword>
<keyword id="KW-0863">Zinc-finger</keyword>
<accession>Q8L6Y4</accession>
<accession>Q53XQ5</accession>
<accession>Q93V59</accession>
<accession>Q9LU50</accession>
<accession>Q9LU51</accession>
<reference key="1">
    <citation type="journal article" date="2001" name="Plant Cell">
        <title>EMBRYONIC FLOWER2, a novel polycomb group protein homolog, mediates shoot development and flowering in Arabidopsis.</title>
        <authorList>
            <person name="Yoshida N."/>
            <person name="Yanai Y."/>
            <person name="Chen L."/>
            <person name="Kato Y."/>
            <person name="Hiratsuka J."/>
            <person name="Miwa T."/>
            <person name="Sung Z.R."/>
            <person name="Takahashi S."/>
        </authorList>
    </citation>
    <scope>NUCLEOTIDE SEQUENCE [GENOMIC DNA / MRNA] (ISOFORM 1)</scope>
    <source>
        <strain>cv. Columbia</strain>
    </source>
</reference>
<reference key="2">
    <citation type="journal article" date="2000" name="DNA Res.">
        <title>Structural analysis of Arabidopsis thaliana chromosome 5. X. Sequence features of the regions of 3,076,755 bp covered by sixty P1 and TAC clones.</title>
        <authorList>
            <person name="Sato S."/>
            <person name="Nakamura Y."/>
            <person name="Kaneko T."/>
            <person name="Katoh T."/>
            <person name="Asamizu E."/>
            <person name="Kotani H."/>
            <person name="Tabata S."/>
        </authorList>
    </citation>
    <scope>NUCLEOTIDE SEQUENCE [LARGE SCALE GENOMIC DNA]</scope>
    <source>
        <strain>cv. Columbia</strain>
    </source>
</reference>
<reference key="3">
    <citation type="journal article" date="2017" name="Plant J.">
        <title>Araport11: a complete reannotation of the Arabidopsis thaliana reference genome.</title>
        <authorList>
            <person name="Cheng C.Y."/>
            <person name="Krishnakumar V."/>
            <person name="Chan A.P."/>
            <person name="Thibaud-Nissen F."/>
            <person name="Schobel S."/>
            <person name="Town C.D."/>
        </authorList>
    </citation>
    <scope>GENOME REANNOTATION</scope>
    <source>
        <strain>cv. Columbia</strain>
    </source>
</reference>
<reference key="4">
    <citation type="journal article" date="2003" name="Science">
        <title>Empirical analysis of transcriptional activity in the Arabidopsis genome.</title>
        <authorList>
            <person name="Yamada K."/>
            <person name="Lim J."/>
            <person name="Dale J.M."/>
            <person name="Chen H."/>
            <person name="Shinn P."/>
            <person name="Palm C.J."/>
            <person name="Southwick A.M."/>
            <person name="Wu H.C."/>
            <person name="Kim C.J."/>
            <person name="Nguyen M."/>
            <person name="Pham P.K."/>
            <person name="Cheuk R.F."/>
            <person name="Karlin-Newmann G."/>
            <person name="Liu S.X."/>
            <person name="Lam B."/>
            <person name="Sakano H."/>
            <person name="Wu T."/>
            <person name="Yu G."/>
            <person name="Miranda M."/>
            <person name="Quach H.L."/>
            <person name="Tripp M."/>
            <person name="Chang C.H."/>
            <person name="Lee J.M."/>
            <person name="Toriumi M.J."/>
            <person name="Chan M.M."/>
            <person name="Tang C.C."/>
            <person name="Onodera C.S."/>
            <person name="Deng J.M."/>
            <person name="Akiyama K."/>
            <person name="Ansari Y."/>
            <person name="Arakawa T."/>
            <person name="Banh J."/>
            <person name="Banno F."/>
            <person name="Bowser L."/>
            <person name="Brooks S.Y."/>
            <person name="Carninci P."/>
            <person name="Chao Q."/>
            <person name="Choy N."/>
            <person name="Enju A."/>
            <person name="Goldsmith A.D."/>
            <person name="Gurjal M."/>
            <person name="Hansen N.F."/>
            <person name="Hayashizaki Y."/>
            <person name="Johnson-Hopson C."/>
            <person name="Hsuan V.W."/>
            <person name="Iida K."/>
            <person name="Karnes M."/>
            <person name="Khan S."/>
            <person name="Koesema E."/>
            <person name="Ishida J."/>
            <person name="Jiang P.X."/>
            <person name="Jones T."/>
            <person name="Kawai J."/>
            <person name="Kamiya A."/>
            <person name="Meyers C."/>
            <person name="Nakajima M."/>
            <person name="Narusaka M."/>
            <person name="Seki M."/>
            <person name="Sakurai T."/>
            <person name="Satou M."/>
            <person name="Tamse R."/>
            <person name="Vaysberg M."/>
            <person name="Wallender E.K."/>
            <person name="Wong C."/>
            <person name="Yamamura Y."/>
            <person name="Yuan S."/>
            <person name="Shinozaki K."/>
            <person name="Davis R.W."/>
            <person name="Theologis A."/>
            <person name="Ecker J.R."/>
        </authorList>
    </citation>
    <scope>NUCLEOTIDE SEQUENCE [LARGE SCALE MRNA] (ISOFORM 2)</scope>
    <source>
        <strain>cv. Columbia</strain>
    </source>
</reference>
<reference key="5">
    <citation type="journal article" date="2008" name="Plant Cell">
        <title>EMBRYONIC FLOWER1 participates in polycomb group-mediated AG gene silencing in Arabidopsis.</title>
        <authorList>
            <person name="Calonje M."/>
            <person name="Sanchez R."/>
            <person name="Chen L."/>
            <person name="Sung Z.R."/>
        </authorList>
    </citation>
    <scope>FUNCTION</scope>
</reference>
<reference key="6">
    <citation type="journal article" date="2010" name="Plant Physiol.">
        <title>Epigenetic regulation of gene programs by EMF1 and EMF2 in Arabidopsis.</title>
        <authorList>
            <person name="Kim S.Y."/>
            <person name="Zhu T."/>
            <person name="Sung Z.R."/>
        </authorList>
    </citation>
    <scope>FUNCTION</scope>
</reference>
<reference key="7">
    <citation type="journal article" date="2015" name="PLoS Genet.">
        <title>Kicking against the PRCs - A domesticated transposase antagonises silencing mediated by polycomb group proteins and is an accessory component of polycomb repressive complex 2.</title>
        <authorList>
            <person name="Liang S.C."/>
            <person name="Hartwig B."/>
            <person name="Perera P."/>
            <person name="Mora-Garcia S."/>
            <person name="de Leau E."/>
            <person name="Thornton H."/>
            <person name="de Lima Alves F."/>
            <person name="de Alves F.L."/>
            <person name="Rappsilber J."/>
            <person name="Rapsilber J."/>
            <person name="Yang S."/>
            <person name="James G.V."/>
            <person name="Schneeberger K."/>
            <person name="Finnegan E.J."/>
            <person name="Turck F."/>
            <person name="Goodrich J."/>
        </authorList>
    </citation>
    <scope>INTERACTION WITH ALP1</scope>
</reference>
<feature type="chain" id="PRO_0000047835" description="Polycomb group protein EMBRYONIC FLOWER 2">
    <location>
        <begin position="1"/>
        <end position="631"/>
    </location>
</feature>
<feature type="zinc finger region" description="C2H2-type">
    <location>
        <begin position="324"/>
        <end position="347"/>
    </location>
</feature>
<feature type="region of interest" description="Disordered" evidence="2">
    <location>
        <begin position="424"/>
        <end position="465"/>
    </location>
</feature>
<feature type="region of interest" description="VEFS-box">
    <location>
        <begin position="505"/>
        <end position="583"/>
    </location>
</feature>
<feature type="compositionally biased region" description="Basic and acidic residues" evidence="2">
    <location>
        <begin position="424"/>
        <end position="446"/>
    </location>
</feature>
<feature type="splice variant" id="VSP_007456" description="In isoform 2." evidence="6">
    <location>
        <begin position="392"/>
        <end position="396"/>
    </location>
</feature>
<proteinExistence type="evidence at protein level"/>
<sequence>MPGIPLVSRETSSCSRSTEQMCHEDSRLRISEEEEIAAEESLAAYCKPVELYNIIQRRAIRNPLFLQRCLHYKIEAKHKRRIQMTVFLSGAIDAGVQTQKLFPLYILLARLVSPKPVAEYSAVYRFSRACILTGGLGVDGVSQAQANFLLPDMNRLALEAKSGSLAILFISFAGAQNSQFGIDSGKIHSGNIGGHCLWSKIPLQSLYASWQKSPNMDLGQRVDTVSLVEMQPCFIKLKSMSEEKCVSIQVPSNPLTSSSPQQVQVTISAEEVGSTEKSPYSSFSYNDISSSSLLQIIRLRTGNVVFNYRYYNNKLQKTEVTEDFSCPFCLVKCASFKGLRYHLPSTHDLLNFEFWVTEEFQAVNVSLKTETMISKVNEDDVDPKQQTFFFSSKKFRRRRQKSQVRSSRQGPHLGLGCEVLDKTDDAHSVRSEKSRIPPGKHYERIGGAESGQRVPPGTSPADVQSCGDPDYVQSIAGSTMLQFAKTRKISIERSDLRNRSLLQKRQFFHSHRAQPMALEQVLSDRDSEDEVDDDVADFEDRRMLDDFVDVTKDEKQMMHMWNSFVRKQRVLADGHIPWACEAFSRLHGPIMVRTPHLIWCWRVFMVKLWNHGLLDARTMNNCNTFLEQLQI</sequence>
<organism>
    <name type="scientific">Arabidopsis thaliana</name>
    <name type="common">Mouse-ear cress</name>
    <dbReference type="NCBI Taxonomy" id="3702"/>
    <lineage>
        <taxon>Eukaryota</taxon>
        <taxon>Viridiplantae</taxon>
        <taxon>Streptophyta</taxon>
        <taxon>Embryophyta</taxon>
        <taxon>Tracheophyta</taxon>
        <taxon>Spermatophyta</taxon>
        <taxon>Magnoliopsida</taxon>
        <taxon>eudicotyledons</taxon>
        <taxon>Gunneridae</taxon>
        <taxon>Pentapetalae</taxon>
        <taxon>rosids</taxon>
        <taxon>malvids</taxon>
        <taxon>Brassicales</taxon>
        <taxon>Brassicaceae</taxon>
        <taxon>Camelineae</taxon>
        <taxon>Arabidopsis</taxon>
    </lineage>
</organism>
<gene>
    <name type="primary">EMF2</name>
    <name type="ordered locus">At5g51230/At5g51240</name>
    <name type="ORF">MWD22.18/MWD22.19</name>
</gene>